<sequence length="404" mass="43097">MQIGQRLGTPLSPSATRVMLLGAGELGKEVIIALQRLGVEVIAVDRYPNAPGHQVAHRAHVIDMTDPDALRALVDAERPHLVVPEIEAIATDALAAIEAAGVCEVIPTARATQLTMNREGIRRLAAEELGLPTSPYAFAQSFDEFAAAVARIGFPCVVKPVMSSSGKGQSVLRSEADIEPAWRYAMAGGRVNHGRVIVEGFIRFDYEITQLTVRAIDPASGQTRTSFCAPIGHLQVAGDYVESWQPQPMSAKALERSRDIAHRVTSALGGRGIFGVELFVRGDDVWFSEVSPRPHDTGLVTLASQRQSEFELHARAILGLPVEPALATPAASAVIYGGLDEAGIAFEGVRDALAVPGADLRLFGKPESFAKRRMGVALATGANVDEARERAKRAAAAVRPVSAR</sequence>
<feature type="chain" id="PRO_0000319138" description="Formate-dependent phosphoribosylglycinamide formyltransferase">
    <location>
        <begin position="1"/>
        <end position="404"/>
    </location>
</feature>
<feature type="domain" description="ATP-grasp" evidence="1">
    <location>
        <begin position="123"/>
        <end position="318"/>
    </location>
</feature>
<feature type="binding site" evidence="1">
    <location>
        <begin position="25"/>
        <end position="26"/>
    </location>
    <ligand>
        <name>N(1)-(5-phospho-beta-D-ribosyl)glycinamide</name>
        <dbReference type="ChEBI" id="CHEBI:143788"/>
    </ligand>
</feature>
<feature type="binding site" evidence="1">
    <location>
        <position position="85"/>
    </location>
    <ligand>
        <name>N(1)-(5-phospho-beta-D-ribosyl)glycinamide</name>
        <dbReference type="ChEBI" id="CHEBI:143788"/>
    </ligand>
</feature>
<feature type="binding site" evidence="1">
    <location>
        <position position="118"/>
    </location>
    <ligand>
        <name>ATP</name>
        <dbReference type="ChEBI" id="CHEBI:30616"/>
    </ligand>
</feature>
<feature type="binding site" evidence="1">
    <location>
        <position position="159"/>
    </location>
    <ligand>
        <name>ATP</name>
        <dbReference type="ChEBI" id="CHEBI:30616"/>
    </ligand>
</feature>
<feature type="binding site" evidence="1">
    <location>
        <begin position="164"/>
        <end position="169"/>
    </location>
    <ligand>
        <name>ATP</name>
        <dbReference type="ChEBI" id="CHEBI:30616"/>
    </ligand>
</feature>
<feature type="binding site" evidence="1">
    <location>
        <begin position="199"/>
        <end position="202"/>
    </location>
    <ligand>
        <name>ATP</name>
        <dbReference type="ChEBI" id="CHEBI:30616"/>
    </ligand>
</feature>
<feature type="binding site" evidence="1">
    <location>
        <position position="207"/>
    </location>
    <ligand>
        <name>ATP</name>
        <dbReference type="ChEBI" id="CHEBI:30616"/>
    </ligand>
</feature>
<feature type="binding site" evidence="1">
    <location>
        <position position="277"/>
    </location>
    <ligand>
        <name>Mg(2+)</name>
        <dbReference type="ChEBI" id="CHEBI:18420"/>
    </ligand>
</feature>
<feature type="binding site" evidence="1">
    <location>
        <position position="289"/>
    </location>
    <ligand>
        <name>Mg(2+)</name>
        <dbReference type="ChEBI" id="CHEBI:18420"/>
    </ligand>
</feature>
<feature type="binding site" evidence="1">
    <location>
        <position position="296"/>
    </location>
    <ligand>
        <name>N(1)-(5-phospho-beta-D-ribosyl)glycinamide</name>
        <dbReference type="ChEBI" id="CHEBI:143788"/>
    </ligand>
</feature>
<feature type="binding site" evidence="1">
    <location>
        <position position="365"/>
    </location>
    <ligand>
        <name>N(1)-(5-phospho-beta-D-ribosyl)glycinamide</name>
        <dbReference type="ChEBI" id="CHEBI:143788"/>
    </ligand>
</feature>
<feature type="binding site" evidence="1">
    <location>
        <begin position="372"/>
        <end position="373"/>
    </location>
    <ligand>
        <name>N(1)-(5-phospho-beta-D-ribosyl)glycinamide</name>
        <dbReference type="ChEBI" id="CHEBI:143788"/>
    </ligand>
</feature>
<organism>
    <name type="scientific">Burkholderia mallei (strain NCTC 10229)</name>
    <dbReference type="NCBI Taxonomy" id="412022"/>
    <lineage>
        <taxon>Bacteria</taxon>
        <taxon>Pseudomonadati</taxon>
        <taxon>Pseudomonadota</taxon>
        <taxon>Betaproteobacteria</taxon>
        <taxon>Burkholderiales</taxon>
        <taxon>Burkholderiaceae</taxon>
        <taxon>Burkholderia</taxon>
        <taxon>pseudomallei group</taxon>
    </lineage>
</organism>
<protein>
    <recommendedName>
        <fullName evidence="1">Formate-dependent phosphoribosylglycinamide formyltransferase</fullName>
        <ecNumber evidence="1">6.3.1.21</ecNumber>
    </recommendedName>
    <alternativeName>
        <fullName evidence="1">5'-phosphoribosylglycinamide transformylase 2</fullName>
    </alternativeName>
    <alternativeName>
        <fullName evidence="1">Formate-dependent GAR transformylase</fullName>
    </alternativeName>
    <alternativeName>
        <fullName evidence="1">GAR transformylase 2</fullName>
        <shortName evidence="1">GART 2</shortName>
    </alternativeName>
    <alternativeName>
        <fullName evidence="1">Non-folate glycinamide ribonucleotide transformylase</fullName>
    </alternativeName>
    <alternativeName>
        <fullName evidence="1">Phosphoribosylglycinamide formyltransferase 2</fullName>
    </alternativeName>
</protein>
<proteinExistence type="inferred from homology"/>
<keyword id="KW-0067">ATP-binding</keyword>
<keyword id="KW-0436">Ligase</keyword>
<keyword id="KW-0460">Magnesium</keyword>
<keyword id="KW-0479">Metal-binding</keyword>
<keyword id="KW-0547">Nucleotide-binding</keyword>
<keyword id="KW-0658">Purine biosynthesis</keyword>
<comment type="function">
    <text evidence="1">Involved in the de novo purine biosynthesis. Catalyzes the transfer of formate to 5-phospho-ribosyl-glycinamide (GAR), producing 5-phospho-ribosyl-N-formylglycinamide (FGAR). Formate is provided by PurU via hydrolysis of 10-formyl-tetrahydrofolate.</text>
</comment>
<comment type="catalytic activity">
    <reaction evidence="1">
        <text>N(1)-(5-phospho-beta-D-ribosyl)glycinamide + formate + ATP = N(2)-formyl-N(1)-(5-phospho-beta-D-ribosyl)glycinamide + ADP + phosphate + H(+)</text>
        <dbReference type="Rhea" id="RHEA:24829"/>
        <dbReference type="ChEBI" id="CHEBI:15378"/>
        <dbReference type="ChEBI" id="CHEBI:15740"/>
        <dbReference type="ChEBI" id="CHEBI:30616"/>
        <dbReference type="ChEBI" id="CHEBI:43474"/>
        <dbReference type="ChEBI" id="CHEBI:143788"/>
        <dbReference type="ChEBI" id="CHEBI:147286"/>
        <dbReference type="ChEBI" id="CHEBI:456216"/>
        <dbReference type="EC" id="6.3.1.21"/>
    </reaction>
    <physiologicalReaction direction="left-to-right" evidence="1">
        <dbReference type="Rhea" id="RHEA:24830"/>
    </physiologicalReaction>
</comment>
<comment type="pathway">
    <text evidence="1">Purine metabolism; IMP biosynthesis via de novo pathway; N(2)-formyl-N(1)-(5-phospho-D-ribosyl)glycinamide from N(1)-(5-phospho-D-ribosyl)glycinamide (formate route): step 1/1.</text>
</comment>
<comment type="subunit">
    <text evidence="1">Homodimer.</text>
</comment>
<comment type="similarity">
    <text evidence="1">Belongs to the PurK/PurT family.</text>
</comment>
<gene>
    <name evidence="1" type="primary">purT</name>
    <name type="ordered locus">BMA10229_A0832</name>
</gene>
<reference key="1">
    <citation type="journal article" date="2010" name="Genome Biol. Evol.">
        <title>Continuing evolution of Burkholderia mallei through genome reduction and large-scale rearrangements.</title>
        <authorList>
            <person name="Losada L."/>
            <person name="Ronning C.M."/>
            <person name="DeShazer D."/>
            <person name="Woods D."/>
            <person name="Fedorova N."/>
            <person name="Kim H.S."/>
            <person name="Shabalina S.A."/>
            <person name="Pearson T.R."/>
            <person name="Brinkac L."/>
            <person name="Tan P."/>
            <person name="Nandi T."/>
            <person name="Crabtree J."/>
            <person name="Badger J."/>
            <person name="Beckstrom-Sternberg S."/>
            <person name="Saqib M."/>
            <person name="Schutzer S.E."/>
            <person name="Keim P."/>
            <person name="Nierman W.C."/>
        </authorList>
    </citation>
    <scope>NUCLEOTIDE SEQUENCE [LARGE SCALE GENOMIC DNA]</scope>
    <source>
        <strain>NCTC 10229</strain>
    </source>
</reference>
<accession>A2S4F3</accession>
<name>PURT_BURM9</name>
<evidence type="ECO:0000255" key="1">
    <source>
        <dbReference type="HAMAP-Rule" id="MF_01643"/>
    </source>
</evidence>
<dbReference type="EC" id="6.3.1.21" evidence="1"/>
<dbReference type="EMBL" id="CP000546">
    <property type="protein sequence ID" value="ABN03765.1"/>
    <property type="molecule type" value="Genomic_DNA"/>
</dbReference>
<dbReference type="RefSeq" id="WP_004186479.1">
    <property type="nucleotide sequence ID" value="NC_008836.1"/>
</dbReference>
<dbReference type="SMR" id="A2S4F3"/>
<dbReference type="GeneID" id="92979633"/>
<dbReference type="KEGG" id="bml:BMA10229_A0832"/>
<dbReference type="HOGENOM" id="CLU_011534_1_3_4"/>
<dbReference type="UniPathway" id="UPA00074">
    <property type="reaction ID" value="UER00127"/>
</dbReference>
<dbReference type="Proteomes" id="UP000002283">
    <property type="component" value="Chromosome I"/>
</dbReference>
<dbReference type="GO" id="GO:0005829">
    <property type="term" value="C:cytosol"/>
    <property type="evidence" value="ECO:0007669"/>
    <property type="project" value="TreeGrafter"/>
</dbReference>
<dbReference type="GO" id="GO:0005524">
    <property type="term" value="F:ATP binding"/>
    <property type="evidence" value="ECO:0007669"/>
    <property type="project" value="UniProtKB-UniRule"/>
</dbReference>
<dbReference type="GO" id="GO:0000287">
    <property type="term" value="F:magnesium ion binding"/>
    <property type="evidence" value="ECO:0007669"/>
    <property type="project" value="InterPro"/>
</dbReference>
<dbReference type="GO" id="GO:0043815">
    <property type="term" value="F:phosphoribosylglycinamide formyltransferase 2 activity"/>
    <property type="evidence" value="ECO:0007669"/>
    <property type="project" value="UniProtKB-UniRule"/>
</dbReference>
<dbReference type="GO" id="GO:0004644">
    <property type="term" value="F:phosphoribosylglycinamide formyltransferase activity"/>
    <property type="evidence" value="ECO:0007669"/>
    <property type="project" value="InterPro"/>
</dbReference>
<dbReference type="GO" id="GO:0006189">
    <property type="term" value="P:'de novo' IMP biosynthetic process"/>
    <property type="evidence" value="ECO:0007669"/>
    <property type="project" value="UniProtKB-UniRule"/>
</dbReference>
<dbReference type="FunFam" id="3.30.1490.20:FF:000013">
    <property type="entry name" value="Formate-dependent phosphoribosylglycinamide formyltransferase"/>
    <property type="match status" value="1"/>
</dbReference>
<dbReference type="FunFam" id="3.40.50.20:FF:000007">
    <property type="entry name" value="Formate-dependent phosphoribosylglycinamide formyltransferase"/>
    <property type="match status" value="1"/>
</dbReference>
<dbReference type="Gene3D" id="3.40.50.20">
    <property type="match status" value="1"/>
</dbReference>
<dbReference type="Gene3D" id="3.30.1490.20">
    <property type="entry name" value="ATP-grasp fold, A domain"/>
    <property type="match status" value="1"/>
</dbReference>
<dbReference type="Gene3D" id="3.30.470.20">
    <property type="entry name" value="ATP-grasp fold, B domain"/>
    <property type="match status" value="1"/>
</dbReference>
<dbReference type="HAMAP" id="MF_01643">
    <property type="entry name" value="PurT"/>
    <property type="match status" value="1"/>
</dbReference>
<dbReference type="InterPro" id="IPR011761">
    <property type="entry name" value="ATP-grasp"/>
</dbReference>
<dbReference type="InterPro" id="IPR003135">
    <property type="entry name" value="ATP-grasp_carboxylate-amine"/>
</dbReference>
<dbReference type="InterPro" id="IPR013815">
    <property type="entry name" value="ATP_grasp_subdomain_1"/>
</dbReference>
<dbReference type="InterPro" id="IPR016185">
    <property type="entry name" value="PreATP-grasp_dom_sf"/>
</dbReference>
<dbReference type="InterPro" id="IPR005862">
    <property type="entry name" value="PurT"/>
</dbReference>
<dbReference type="InterPro" id="IPR054350">
    <property type="entry name" value="PurT/PurK_preATP-grasp"/>
</dbReference>
<dbReference type="InterPro" id="IPR048740">
    <property type="entry name" value="PurT_C"/>
</dbReference>
<dbReference type="InterPro" id="IPR011054">
    <property type="entry name" value="Rudment_hybrid_motif"/>
</dbReference>
<dbReference type="NCBIfam" id="NF006766">
    <property type="entry name" value="PRK09288.1"/>
    <property type="match status" value="1"/>
</dbReference>
<dbReference type="NCBIfam" id="TIGR01142">
    <property type="entry name" value="purT"/>
    <property type="match status" value="1"/>
</dbReference>
<dbReference type="PANTHER" id="PTHR43055">
    <property type="entry name" value="FORMATE-DEPENDENT PHOSPHORIBOSYLGLYCINAMIDE FORMYLTRANSFERASE"/>
    <property type="match status" value="1"/>
</dbReference>
<dbReference type="PANTHER" id="PTHR43055:SF1">
    <property type="entry name" value="FORMATE-DEPENDENT PHOSPHORIBOSYLGLYCINAMIDE FORMYLTRANSFERASE"/>
    <property type="match status" value="1"/>
</dbReference>
<dbReference type="Pfam" id="PF02222">
    <property type="entry name" value="ATP-grasp"/>
    <property type="match status" value="1"/>
</dbReference>
<dbReference type="Pfam" id="PF21244">
    <property type="entry name" value="PurT_C"/>
    <property type="match status" value="1"/>
</dbReference>
<dbReference type="Pfam" id="PF22660">
    <property type="entry name" value="RS_preATP-grasp-like"/>
    <property type="match status" value="1"/>
</dbReference>
<dbReference type="SUPFAM" id="SSF56059">
    <property type="entry name" value="Glutathione synthetase ATP-binding domain-like"/>
    <property type="match status" value="1"/>
</dbReference>
<dbReference type="SUPFAM" id="SSF52440">
    <property type="entry name" value="PreATP-grasp domain"/>
    <property type="match status" value="1"/>
</dbReference>
<dbReference type="SUPFAM" id="SSF51246">
    <property type="entry name" value="Rudiment single hybrid motif"/>
    <property type="match status" value="1"/>
</dbReference>
<dbReference type="PROSITE" id="PS50975">
    <property type="entry name" value="ATP_GRASP"/>
    <property type="match status" value="1"/>
</dbReference>